<name>RK1_GRATL</name>
<gene>
    <name type="primary">rpl1</name>
    <name type="ordered locus">Grc000048</name>
</gene>
<keyword id="KW-0150">Chloroplast</keyword>
<keyword id="KW-0934">Plastid</keyword>
<keyword id="KW-0687">Ribonucleoprotein</keyword>
<keyword id="KW-0689">Ribosomal protein</keyword>
<keyword id="KW-0694">RNA-binding</keyword>
<keyword id="KW-0699">rRNA-binding</keyword>
<reference key="1">
    <citation type="journal article" date="2004" name="J. Mol. Evol.">
        <title>Comparative analysis of the complete plastid genome sequence of the red alga Gracilaria tenuistipitata var. liui provides insights into the evolution of rhodoplasts and their relationship to other plastids.</title>
        <authorList>
            <person name="Hagopian J.C."/>
            <person name="Reis M."/>
            <person name="Kitajima J.P."/>
            <person name="Bhattacharya D."/>
            <person name="de Oliveira M.C."/>
        </authorList>
    </citation>
    <scope>NUCLEOTIDE SEQUENCE [LARGE SCALE GENOMIC DNA]</scope>
</reference>
<evidence type="ECO:0000250" key="1"/>
<evidence type="ECO:0000305" key="2"/>
<accession>Q6B906</accession>
<geneLocation type="chloroplast"/>
<comment type="function">
    <text evidence="2">Binds directly to 23S rRNA. Might be involved in E site tRNA release (Potential).</text>
</comment>
<comment type="subunit">
    <text evidence="1">Part of the 50S ribosomal subunit.</text>
</comment>
<comment type="subcellular location">
    <subcellularLocation>
        <location>Plastid</location>
        <location>Chloroplast</location>
    </subcellularLocation>
</comment>
<comment type="similarity">
    <text evidence="2">Belongs to the universal ribosomal protein uL1 family.</text>
</comment>
<organism>
    <name type="scientific">Gracilaria tenuistipitata var. liui</name>
    <name type="common">Red alga</name>
    <dbReference type="NCBI Taxonomy" id="285951"/>
    <lineage>
        <taxon>Eukaryota</taxon>
        <taxon>Rhodophyta</taxon>
        <taxon>Florideophyceae</taxon>
        <taxon>Rhodymeniophycidae</taxon>
        <taxon>Gracilariales</taxon>
        <taxon>Gracilariaceae</taxon>
        <taxon>Gracilaria</taxon>
        <taxon>Gracilaria tenuistipitata</taxon>
    </lineage>
</organism>
<sequence length="235" mass="26287">MKKRSRRFSTLLKQIEADKLYSPLDALNLMKNLSNVKFIETAEVHIVLGLDPKYADQQLRTTVMLPKGTGKIMRVAVITQNNKTHEAKSSGADIVGGEDLIDEIKKGRLDFDKLIATPDMMMSIAKLGKILGPKGLMPSPKAGTVTHNLITTIKEFKAGKLEYKIDRSGILHIPFGKLNFNVEDLHINLITLQESIDRNRPQGSKGKYWKSVHINSTMGPSIPLDIQLLRNNYVL</sequence>
<protein>
    <recommendedName>
        <fullName evidence="2">Large ribosomal subunit protein uL1c</fullName>
    </recommendedName>
    <alternativeName>
        <fullName>50S ribosomal protein L1, chloroplastic</fullName>
    </alternativeName>
</protein>
<proteinExistence type="inferred from homology"/>
<feature type="chain" id="PRO_0000125788" description="Large ribosomal subunit protein uL1c">
    <location>
        <begin position="1"/>
        <end position="235"/>
    </location>
</feature>
<dbReference type="EMBL" id="AY673996">
    <property type="protein sequence ID" value="AAT79629.1"/>
    <property type="molecule type" value="Genomic_DNA"/>
</dbReference>
<dbReference type="RefSeq" id="YP_063554.1">
    <property type="nucleotide sequence ID" value="NC_006137.1"/>
</dbReference>
<dbReference type="SMR" id="Q6B906"/>
<dbReference type="GeneID" id="2944083"/>
<dbReference type="GO" id="GO:0009507">
    <property type="term" value="C:chloroplast"/>
    <property type="evidence" value="ECO:0007669"/>
    <property type="project" value="UniProtKB-SubCell"/>
</dbReference>
<dbReference type="GO" id="GO:0015934">
    <property type="term" value="C:large ribosomal subunit"/>
    <property type="evidence" value="ECO:0007669"/>
    <property type="project" value="InterPro"/>
</dbReference>
<dbReference type="GO" id="GO:0019843">
    <property type="term" value="F:rRNA binding"/>
    <property type="evidence" value="ECO:0007669"/>
    <property type="project" value="UniProtKB-UniRule"/>
</dbReference>
<dbReference type="GO" id="GO:0003735">
    <property type="term" value="F:structural constituent of ribosome"/>
    <property type="evidence" value="ECO:0007669"/>
    <property type="project" value="InterPro"/>
</dbReference>
<dbReference type="GO" id="GO:0006412">
    <property type="term" value="P:translation"/>
    <property type="evidence" value="ECO:0007669"/>
    <property type="project" value="UniProtKB-UniRule"/>
</dbReference>
<dbReference type="CDD" id="cd00403">
    <property type="entry name" value="Ribosomal_L1"/>
    <property type="match status" value="1"/>
</dbReference>
<dbReference type="FunFam" id="3.40.50.790:FF:000001">
    <property type="entry name" value="50S ribosomal protein L1"/>
    <property type="match status" value="1"/>
</dbReference>
<dbReference type="Gene3D" id="3.30.190.20">
    <property type="match status" value="1"/>
</dbReference>
<dbReference type="Gene3D" id="3.40.50.790">
    <property type="match status" value="1"/>
</dbReference>
<dbReference type="HAMAP" id="MF_01318_B">
    <property type="entry name" value="Ribosomal_uL1_B"/>
    <property type="match status" value="1"/>
</dbReference>
<dbReference type="InterPro" id="IPR005878">
    <property type="entry name" value="Ribosom_uL1_bac-type"/>
</dbReference>
<dbReference type="InterPro" id="IPR002143">
    <property type="entry name" value="Ribosomal_uL1"/>
</dbReference>
<dbReference type="InterPro" id="IPR023674">
    <property type="entry name" value="Ribosomal_uL1-like"/>
</dbReference>
<dbReference type="InterPro" id="IPR028364">
    <property type="entry name" value="Ribosomal_uL1/biogenesis"/>
</dbReference>
<dbReference type="InterPro" id="IPR016095">
    <property type="entry name" value="Ribosomal_uL1_3-a/b-sand"/>
</dbReference>
<dbReference type="InterPro" id="IPR023673">
    <property type="entry name" value="Ribosomal_uL1_CS"/>
</dbReference>
<dbReference type="NCBIfam" id="TIGR01169">
    <property type="entry name" value="rplA_bact"/>
    <property type="match status" value="1"/>
</dbReference>
<dbReference type="PANTHER" id="PTHR36427">
    <property type="entry name" value="54S RIBOSOMAL PROTEIN L1, MITOCHONDRIAL"/>
    <property type="match status" value="1"/>
</dbReference>
<dbReference type="PANTHER" id="PTHR36427:SF3">
    <property type="entry name" value="LARGE RIBOSOMAL SUBUNIT PROTEIN UL1M"/>
    <property type="match status" value="1"/>
</dbReference>
<dbReference type="Pfam" id="PF00687">
    <property type="entry name" value="Ribosomal_L1"/>
    <property type="match status" value="1"/>
</dbReference>
<dbReference type="PIRSF" id="PIRSF002155">
    <property type="entry name" value="Ribosomal_L1"/>
    <property type="match status" value="1"/>
</dbReference>
<dbReference type="SUPFAM" id="SSF56808">
    <property type="entry name" value="Ribosomal protein L1"/>
    <property type="match status" value="1"/>
</dbReference>
<dbReference type="PROSITE" id="PS01199">
    <property type="entry name" value="RIBOSOMAL_L1"/>
    <property type="match status" value="1"/>
</dbReference>